<organismHost>
    <name type="scientific">Ornithodoros</name>
    <name type="common">relapsing fever ticks</name>
    <dbReference type="NCBI Taxonomy" id="6937"/>
</organismHost>
<organismHost>
    <name type="scientific">Sus scrofa</name>
    <name type="common">Pig</name>
    <dbReference type="NCBI Taxonomy" id="9823"/>
</organismHost>
<comment type="function">
    <text evidence="1">Component of the DNA-directed RNA polymerase (RNAP) that catalyzes the transcription in the cytoplasm of viral DNA into RNA using the four ribonucleoside triphosphates as substrates.</text>
</comment>
<comment type="subunit">
    <text evidence="5">Part of the viral DNA-directed RNA polymerase that consists of 8 polII-like subunits (RPB1, RPB2, RPB3, RPB5, RPB6, RPB7, RPB9, RPB10), a capping enzyme and a termination factor.</text>
</comment>
<comment type="subcellular location">
    <subcellularLocation>
        <location evidence="6">Host cytoplasm</location>
    </subcellularLocation>
    <subcellularLocation>
        <location evidence="2">Virion</location>
    </subcellularLocation>
    <text evidence="2">Found in association with viral nucleoid.</text>
</comment>
<comment type="induction">
    <text evidence="3">Expressed in the early phase of the viral replicative cycle.</text>
</comment>
<comment type="similarity">
    <text evidence="6">In the N-terminal section; belongs to the archaeal RpoD/eukaryotic RPB3 RNA polymerase subunit family.</text>
</comment>
<comment type="similarity">
    <text evidence="6">In the C-terminal section; belongs to the archaeal RpoL/eukaryotic RPB11/RPC19 RNA polymerase subunit family.</text>
</comment>
<reference key="1">
    <citation type="journal article" date="1995" name="Virology">
        <title>Analysis of the complete nucleotide sequence of African swine fever virus.</title>
        <authorList>
            <person name="Yanez R.J."/>
            <person name="Rodriguez J.M."/>
            <person name="Nogal M.L."/>
            <person name="Yuste L."/>
            <person name="Enriquez C."/>
            <person name="Rodriguez J.F."/>
            <person name="Vinuela E."/>
        </authorList>
    </citation>
    <scope>NUCLEOTIDE SEQUENCE [LARGE SCALE GENOMIC DNA]</scope>
</reference>
<reference key="2">
    <citation type="journal article" date="2013" name="Virus Res.">
        <title>African swine fever virus transcription.</title>
        <authorList>
            <person name="Rodriguez J.M."/>
            <person name="Salas M.L."/>
        </authorList>
    </citation>
    <scope>REVIEW</scope>
</reference>
<reference key="3">
    <citation type="journal article" date="2018" name="J. Virol.">
        <title>A Proteomic Atlas of the African Swine Fever Virus Particle.</title>
        <authorList>
            <person name="Alejo A."/>
            <person name="Matamoros T."/>
            <person name="Guerra M."/>
            <person name="Andres G."/>
        </authorList>
    </citation>
    <scope>SUBCELLULAR LOCATION</scope>
</reference>
<reference key="4">
    <citation type="journal article" date="2020" name="Biochem. Soc. Trans.">
        <title>Transcriptome view of a killer: African swine fever virus.</title>
        <authorList>
            <person name="Cackett G."/>
            <person name="Sykora M."/>
            <person name="Werner F."/>
        </authorList>
    </citation>
    <scope>REVIEW</scope>
</reference>
<reference key="5">
    <citation type="journal article" date="2020" name="J. Virol.">
        <title>The African Swine Fever Virus Transcriptome.</title>
        <authorList>
            <person name="Cackett G."/>
            <person name="Matelska D."/>
            <person name="Sykora M."/>
            <person name="Portugal R."/>
            <person name="Malecki M."/>
            <person name="Baehler J."/>
            <person name="Dixon L."/>
            <person name="Werner F."/>
        </authorList>
    </citation>
    <scope>INDUCTION</scope>
</reference>
<organism>
    <name type="scientific">African swine fever virus (strain Badajoz 1971 Vero-adapted)</name>
    <name type="common">Ba71V</name>
    <name type="synonym">ASFV</name>
    <dbReference type="NCBI Taxonomy" id="10498"/>
    <lineage>
        <taxon>Viruses</taxon>
        <taxon>Varidnaviria</taxon>
        <taxon>Bamfordvirae</taxon>
        <taxon>Nucleocytoviricota</taxon>
        <taxon>Pokkesviricetes</taxon>
        <taxon>Asfuvirales</taxon>
        <taxon>Asfarviridae</taxon>
        <taxon>Asfivirus</taxon>
        <taxon>African swine fever virus</taxon>
    </lineage>
</organism>
<keyword id="KW-0002">3D-structure</keyword>
<keyword id="KW-0240">DNA-directed RNA polymerase</keyword>
<keyword id="KW-0244">Early protein</keyword>
<keyword id="KW-1035">Host cytoplasm</keyword>
<keyword id="KW-1185">Reference proteome</keyword>
<keyword id="KW-0804">Transcription</keyword>
<keyword id="KW-1195">Viral transcription</keyword>
<keyword id="KW-0946">Virion</keyword>
<dbReference type="EMBL" id="U18466">
    <property type="protein sequence ID" value="AAA65342.1"/>
    <property type="molecule type" value="Genomic_DNA"/>
</dbReference>
<dbReference type="RefSeq" id="NP_042806.1">
    <property type="nucleotide sequence ID" value="NC_001659.2"/>
</dbReference>
<dbReference type="PDB" id="8Q3B">
    <property type="method" value="EM"/>
    <property type="resolution" value="2.69 A"/>
    <property type="chains" value="C=1-359"/>
</dbReference>
<dbReference type="PDB" id="8Q3K">
    <property type="method" value="EM"/>
    <property type="resolution" value="2.92 A"/>
    <property type="chains" value="C=1-359"/>
</dbReference>
<dbReference type="PDB" id="8XX4">
    <property type="method" value="EM"/>
    <property type="resolution" value="2.60 A"/>
    <property type="chains" value="C=2-359"/>
</dbReference>
<dbReference type="PDB" id="8XX5">
    <property type="method" value="EM"/>
    <property type="resolution" value="2.40 A"/>
    <property type="chains" value="C=1-359"/>
</dbReference>
<dbReference type="PDB" id="8XXP">
    <property type="method" value="EM"/>
    <property type="resolution" value="2.60 A"/>
    <property type="chains" value="C=1-359"/>
</dbReference>
<dbReference type="PDB" id="8XXT">
    <property type="method" value="EM"/>
    <property type="resolution" value="2.85 A"/>
    <property type="chains" value="C=2-359"/>
</dbReference>
<dbReference type="PDB" id="8XY6">
    <property type="method" value="EM"/>
    <property type="resolution" value="3.00 A"/>
    <property type="chains" value="C=2-359"/>
</dbReference>
<dbReference type="PDB" id="8Y0E">
    <property type="method" value="EM"/>
    <property type="resolution" value="3.00 A"/>
    <property type="chains" value="C=1-359"/>
</dbReference>
<dbReference type="PDB" id="8YQT">
    <property type="method" value="EM"/>
    <property type="resolution" value="2.56 A"/>
    <property type="chains" value="C=1-359"/>
</dbReference>
<dbReference type="PDB" id="8YQU">
    <property type="method" value="EM"/>
    <property type="resolution" value="2.85 A"/>
    <property type="chains" value="C=1-359"/>
</dbReference>
<dbReference type="PDB" id="8YQV">
    <property type="method" value="EM"/>
    <property type="resolution" value="2.67 A"/>
    <property type="chains" value="C=1-359"/>
</dbReference>
<dbReference type="PDB" id="8YQW">
    <property type="method" value="EM"/>
    <property type="resolution" value="2.68 A"/>
    <property type="chains" value="C=1-359"/>
</dbReference>
<dbReference type="PDB" id="8YQY">
    <property type="method" value="EM"/>
    <property type="resolution" value="3.68 A"/>
    <property type="chains" value="C=1-359"/>
</dbReference>
<dbReference type="PDB" id="8YQZ">
    <property type="method" value="EM"/>
    <property type="resolution" value="2.78 A"/>
    <property type="chains" value="C=1-359"/>
</dbReference>
<dbReference type="PDBsum" id="8Q3B"/>
<dbReference type="PDBsum" id="8Q3K"/>
<dbReference type="PDBsum" id="8XX4"/>
<dbReference type="PDBsum" id="8XX5"/>
<dbReference type="PDBsum" id="8XXP"/>
<dbReference type="PDBsum" id="8XXT"/>
<dbReference type="PDBsum" id="8XY6"/>
<dbReference type="PDBsum" id="8Y0E"/>
<dbReference type="PDBsum" id="8YQT"/>
<dbReference type="PDBsum" id="8YQU"/>
<dbReference type="PDBsum" id="8YQV"/>
<dbReference type="PDBsum" id="8YQW"/>
<dbReference type="PDBsum" id="8YQY"/>
<dbReference type="PDBsum" id="8YQZ"/>
<dbReference type="EMDB" id="EMD-18120"/>
<dbReference type="EMDB" id="EMD-18129"/>
<dbReference type="SMR" id="Q65184"/>
<dbReference type="GeneID" id="22220342"/>
<dbReference type="KEGG" id="vg:22220342"/>
<dbReference type="Proteomes" id="UP000000624">
    <property type="component" value="Segment"/>
</dbReference>
<dbReference type="GO" id="GO:0000428">
    <property type="term" value="C:DNA-directed RNA polymerase complex"/>
    <property type="evidence" value="ECO:0007669"/>
    <property type="project" value="UniProtKB-KW"/>
</dbReference>
<dbReference type="GO" id="GO:0030430">
    <property type="term" value="C:host cell cytoplasm"/>
    <property type="evidence" value="ECO:0007669"/>
    <property type="project" value="UniProtKB-SubCell"/>
</dbReference>
<dbReference type="GO" id="GO:0044423">
    <property type="term" value="C:virion component"/>
    <property type="evidence" value="ECO:0007669"/>
    <property type="project" value="UniProtKB-KW"/>
</dbReference>
<dbReference type="GO" id="GO:0046983">
    <property type="term" value="F:protein dimerization activity"/>
    <property type="evidence" value="ECO:0007669"/>
    <property type="project" value="InterPro"/>
</dbReference>
<dbReference type="GO" id="GO:0006351">
    <property type="term" value="P:DNA-templated transcription"/>
    <property type="evidence" value="ECO:0007669"/>
    <property type="project" value="InterPro"/>
</dbReference>
<dbReference type="GO" id="GO:0019083">
    <property type="term" value="P:viral transcription"/>
    <property type="evidence" value="ECO:0007669"/>
    <property type="project" value="UniProtKB-KW"/>
</dbReference>
<dbReference type="Gene3D" id="3.30.1360.10">
    <property type="entry name" value="RNA polymerase, RBP11-like subunit"/>
    <property type="match status" value="1"/>
</dbReference>
<dbReference type="InterPro" id="IPR036603">
    <property type="entry name" value="RBP11-like"/>
</dbReference>
<dbReference type="InterPro" id="IPR009025">
    <property type="entry name" value="RBP11-like_dimer"/>
</dbReference>
<dbReference type="InterPro" id="IPR036643">
    <property type="entry name" value="RNApol_insert_sf"/>
</dbReference>
<dbReference type="Pfam" id="PF13656">
    <property type="entry name" value="RNA_pol_L_2"/>
    <property type="match status" value="1"/>
</dbReference>
<dbReference type="SUPFAM" id="SSF56553">
    <property type="entry name" value="Insert subdomain of RNA polymerase alpha subunit"/>
    <property type="match status" value="1"/>
</dbReference>
<dbReference type="SUPFAM" id="SSF55257">
    <property type="entry name" value="RBP11-like subunits of RNA polymerase"/>
    <property type="match status" value="1"/>
</dbReference>
<protein>
    <recommendedName>
        <fullName evidence="4 5">DNA-directed RNA polymerase RPB3-11 homolog</fullName>
        <shortName evidence="6">RPB3-11 homolog</shortName>
    </recommendedName>
</protein>
<sequence>MEKIFQNVEIKPFLIDFSNPFIKNAAKRLFQLEEQLPLVPVNVVMDFKGISRAAVHGLSRVLQDEIPNYMLDIKPGGYKIEDSTDLFMTEQFIRNRINFIPIYAKNETLVFALRSLNNSCEVKTIYSRDLIQVAGPKLKYPIFNPTFEIGFLQPGKSLIIEDIYIKKGIGRKHAAFNLAVKTHFSHLDIEQYPTDKKEYMALSGYKQSSMTSDPRHHRLGLCFPAVPLPHINQAVRTYLKNACRIIIGRIQSIQKIYENFEEPQPELVLFSLDEEKTKAIITIKDETHTIGNLLKTCIYEMIPDISFVGYQCVPHKQEMVLTIIHKASQEDLITLLEKSIQNIIQTFQILEKNVDELIA</sequence>
<gene>
    <name type="ordered locus">Ba71V-113</name>
    <name type="ORF">H359L</name>
</gene>
<name>RPB3_ASFB7</name>
<evidence type="ECO:0000250" key="1">
    <source>
        <dbReference type="UniProtKB" id="P19387"/>
    </source>
</evidence>
<evidence type="ECO:0000269" key="2">
    <source>
    </source>
</evidence>
<evidence type="ECO:0000269" key="3">
    <source>
    </source>
</evidence>
<evidence type="ECO:0000303" key="4">
    <source>
    </source>
</evidence>
<evidence type="ECO:0000303" key="5">
    <source>
    </source>
</evidence>
<evidence type="ECO:0000305" key="6"/>
<evidence type="ECO:0007829" key="7">
    <source>
        <dbReference type="PDB" id="8Q3B"/>
    </source>
</evidence>
<feature type="chain" id="PRO_0000373164" description="DNA-directed RNA polymerase RPB3-11 homolog">
    <location>
        <begin position="1"/>
        <end position="359"/>
    </location>
</feature>
<feature type="strand" evidence="7">
    <location>
        <begin position="4"/>
        <end position="12"/>
    </location>
</feature>
<feature type="helix" evidence="7">
    <location>
        <begin position="20"/>
        <end position="30"/>
    </location>
</feature>
<feature type="strand" evidence="7">
    <location>
        <begin position="37"/>
        <end position="50"/>
    </location>
</feature>
<feature type="helix" evidence="7">
    <location>
        <begin position="52"/>
        <end position="63"/>
    </location>
</feature>
<feature type="strand" evidence="7">
    <location>
        <begin position="64"/>
        <end position="66"/>
    </location>
</feature>
<feature type="strand" evidence="7">
    <location>
        <begin position="68"/>
        <end position="73"/>
    </location>
</feature>
<feature type="strand" evidence="7">
    <location>
        <begin position="86"/>
        <end position="88"/>
    </location>
</feature>
<feature type="helix" evidence="7">
    <location>
        <begin position="90"/>
        <end position="98"/>
    </location>
</feature>
<feature type="strand" evidence="7">
    <location>
        <begin position="110"/>
        <end position="116"/>
    </location>
</feature>
<feature type="strand" evidence="7">
    <location>
        <begin position="119"/>
        <end position="121"/>
    </location>
</feature>
<feature type="strand" evidence="7">
    <location>
        <begin position="123"/>
        <end position="126"/>
    </location>
</feature>
<feature type="helix" evidence="7">
    <location>
        <begin position="127"/>
        <end position="129"/>
    </location>
</feature>
<feature type="strand" evidence="7">
    <location>
        <begin position="131"/>
        <end position="136"/>
    </location>
</feature>
<feature type="strand" evidence="7">
    <location>
        <begin position="148"/>
        <end position="152"/>
    </location>
</feature>
<feature type="strand" evidence="7">
    <location>
        <begin position="157"/>
        <end position="168"/>
    </location>
</feature>
<feature type="turn" evidence="7">
    <location>
        <begin position="170"/>
        <end position="172"/>
    </location>
</feature>
<feature type="helix" evidence="7">
    <location>
        <begin position="174"/>
        <end position="176"/>
    </location>
</feature>
<feature type="strand" evidence="7">
    <location>
        <begin position="180"/>
        <end position="189"/>
    </location>
</feature>
<feature type="turn" evidence="7">
    <location>
        <begin position="197"/>
        <end position="201"/>
    </location>
</feature>
<feature type="strand" evidence="7">
    <location>
        <begin position="204"/>
        <end position="207"/>
    </location>
</feature>
<feature type="turn" evidence="7">
    <location>
        <begin position="209"/>
        <end position="211"/>
    </location>
</feature>
<feature type="strand" evidence="7">
    <location>
        <begin position="216"/>
        <end position="228"/>
    </location>
</feature>
<feature type="helix" evidence="7">
    <location>
        <begin position="231"/>
        <end position="258"/>
    </location>
</feature>
<feature type="turn" evidence="7">
    <location>
        <begin position="259"/>
        <end position="261"/>
    </location>
</feature>
<feature type="strand" evidence="7">
    <location>
        <begin position="265"/>
        <end position="271"/>
    </location>
</feature>
<feature type="strand" evidence="7">
    <location>
        <begin position="273"/>
        <end position="275"/>
    </location>
</feature>
<feature type="strand" evidence="7">
    <location>
        <begin position="277"/>
        <end position="284"/>
    </location>
</feature>
<feature type="helix" evidence="7">
    <location>
        <begin position="288"/>
        <end position="301"/>
    </location>
</feature>
<feature type="strand" evidence="7">
    <location>
        <begin position="306"/>
        <end position="312"/>
    </location>
</feature>
<feature type="turn" evidence="7">
    <location>
        <begin position="314"/>
        <end position="316"/>
    </location>
</feature>
<feature type="strand" evidence="7">
    <location>
        <begin position="318"/>
        <end position="327"/>
    </location>
</feature>
<feature type="helix" evidence="7">
    <location>
        <begin position="329"/>
        <end position="358"/>
    </location>
</feature>
<accession>Q65184</accession>
<proteinExistence type="evidence at protein level"/>